<dbReference type="GO" id="GO:0005576">
    <property type="term" value="C:extracellular region"/>
    <property type="evidence" value="ECO:0007669"/>
    <property type="project" value="UniProtKB-SubCell"/>
</dbReference>
<dbReference type="GO" id="GO:0042025">
    <property type="term" value="C:host cell nucleus"/>
    <property type="evidence" value="ECO:0007669"/>
    <property type="project" value="UniProtKB-SubCell"/>
</dbReference>
<sequence length="466" mass="52118">MRGAYSVITALLVVASSQIAAESDYQLQVYHHDVTVAGNAVVKSLPKRYLRGSQHVHDSNEERSVYSVLASMINEGVSKMPQAAEAVEKMPQAAEAVKKMPHAATAGKKVSRVTRTGKKMTSHGANARKGPLRADFVEKMPHAAEAKEEMQRANQHDLLKAIHQADEALEKSWHPSSDTAAIRYASHGISSNVILTLKEWRKNFRGMREMAVSSEHKDIIKPIHKAFVRLCGENMDPTTIEMSHIWNMMDWNVAASPATSHRQNLVSQAQRYVLIGLRSMKKDPAVWKEWNKLSKSLRFGVLDYLLNLHYQRWVRMYNIFKRHRPDKWDVPMNDKLSLDGNTDTNSALALQTHSNKQSLYPNEPSNAAWTSKGDRFVSSKRSRRTFNGNTDTASLPSKRSKVRSSKSFVPLSTESTTFGDHSVSTKTSRVSAVAPPKRPKAHNLDVLASAATALALKDSEFVMHES</sequence>
<organism>
    <name type="scientific">Plasmopara viticola</name>
    <name type="common">Downy mildew of grapevine</name>
    <name type="synonym">Botrytis viticola</name>
    <dbReference type="NCBI Taxonomy" id="143451"/>
    <lineage>
        <taxon>Eukaryota</taxon>
        <taxon>Sar</taxon>
        <taxon>Stramenopiles</taxon>
        <taxon>Oomycota</taxon>
        <taxon>Peronosporales</taxon>
        <taxon>Peronosporaceae</taxon>
        <taxon>Plasmopara</taxon>
    </lineage>
</organism>
<proteinExistence type="evidence at transcript level"/>
<accession>P0CV39</accession>
<gene>
    <name evidence="4" type="primary">RXLR101</name>
</gene>
<comment type="function">
    <text evidence="3">Secreted effector that partially suppresses the host cell death induced by cell death-inducing proteins.</text>
</comment>
<comment type="subcellular location">
    <subcellularLocation>
        <location evidence="3">Secreted</location>
    </subcellularLocation>
    <subcellularLocation>
        <location evidence="3">Host nucleus</location>
    </subcellularLocation>
</comment>
<comment type="domain">
    <text evidence="6">The RxLR-dEER motif acts to carry the protein into the host cell cytoplasm through binding to cell surface phosphatidylinositol-3-phosphate.</text>
</comment>
<comment type="similarity">
    <text evidence="5">Belongs to the RxLR effector family.</text>
</comment>
<feature type="signal peptide" evidence="1">
    <location>
        <begin position="1"/>
        <end position="21"/>
    </location>
</feature>
<feature type="chain" id="PRO_0000447948" description="Secreted RxLR effector protein 101">
    <location>
        <begin position="22"/>
        <end position="466"/>
    </location>
</feature>
<feature type="region of interest" description="Disordered" evidence="2">
    <location>
        <begin position="99"/>
        <end position="127"/>
    </location>
</feature>
<feature type="region of interest" description="Disordered" evidence="2">
    <location>
        <begin position="384"/>
        <end position="405"/>
    </location>
</feature>
<feature type="short sequence motif" description="RxLR-dEER" evidence="6">
    <location>
        <begin position="48"/>
        <end position="63"/>
    </location>
</feature>
<feature type="compositionally biased region" description="Basic residues" evidence="2">
    <location>
        <begin position="109"/>
        <end position="121"/>
    </location>
</feature>
<feature type="compositionally biased region" description="Polar residues" evidence="2">
    <location>
        <begin position="385"/>
        <end position="395"/>
    </location>
</feature>
<name>RL101_PLAVT</name>
<evidence type="ECO:0000255" key="1"/>
<evidence type="ECO:0000256" key="2">
    <source>
        <dbReference type="SAM" id="MobiDB-lite"/>
    </source>
</evidence>
<evidence type="ECO:0000269" key="3">
    <source>
    </source>
</evidence>
<evidence type="ECO:0000303" key="4">
    <source>
    </source>
</evidence>
<evidence type="ECO:0000305" key="5"/>
<evidence type="ECO:0000305" key="6">
    <source>
    </source>
</evidence>
<protein>
    <recommendedName>
        <fullName evidence="4">Secreted RxLR effector protein 101</fullName>
    </recommendedName>
</protein>
<keyword id="KW-1048">Host nucleus</keyword>
<keyword id="KW-0964">Secreted</keyword>
<keyword id="KW-0732">Signal</keyword>
<keyword id="KW-0843">Virulence</keyword>
<reference key="1">
    <citation type="journal article" date="2018" name="Front. Plant Sci.">
        <title>In planta functional analysis and subcellular localization of the oomycete pathogen Plasmopara viticola candidate RXLR effector repertoire.</title>
        <authorList>
            <person name="Liu Y."/>
            <person name="Lan X."/>
            <person name="Song S."/>
            <person name="Yin L."/>
            <person name="Dry I.B."/>
            <person name="Qu J."/>
            <person name="Xiang J."/>
            <person name="Lu J."/>
        </authorList>
    </citation>
    <scope>NUCLEOTIDE SEQUENCE [MRNA]</scope>
    <scope>DOMAIN</scope>
    <scope>FUNCTION</scope>
    <scope>SUBCELLULAR LOCATION</scope>
</reference>